<feature type="chain" id="PRO_1000072535" description="Cyanate hydratase">
    <location>
        <begin position="1"/>
        <end position="147"/>
    </location>
</feature>
<feature type="active site" evidence="1">
    <location>
        <position position="88"/>
    </location>
</feature>
<feature type="active site" evidence="1">
    <location>
        <position position="91"/>
    </location>
</feature>
<feature type="active site" evidence="1">
    <location>
        <position position="114"/>
    </location>
</feature>
<protein>
    <recommendedName>
        <fullName evidence="1">Cyanate hydratase</fullName>
        <shortName evidence="1">Cyanase</shortName>
        <ecNumber evidence="1">4.2.1.104</ecNumber>
    </recommendedName>
    <alternativeName>
        <fullName evidence="1">Cyanate hydrolase</fullName>
    </alternativeName>
    <alternativeName>
        <fullName evidence="1">Cyanate lyase</fullName>
    </alternativeName>
</protein>
<proteinExistence type="inferred from homology"/>
<keyword id="KW-0456">Lyase</keyword>
<keyword id="KW-1185">Reference proteome</keyword>
<reference key="1">
    <citation type="journal article" date="2007" name="J. Bacteriol.">
        <title>Whole-genome analysis of the methyl tert-butyl ether-degrading beta-proteobacterium Methylibium petroleiphilum PM1.</title>
        <authorList>
            <person name="Kane S.R."/>
            <person name="Chakicherla A.Y."/>
            <person name="Chain P.S.G."/>
            <person name="Schmidt R."/>
            <person name="Shin M.W."/>
            <person name="Legler T.C."/>
            <person name="Scow K.M."/>
            <person name="Larimer F.W."/>
            <person name="Lucas S.M."/>
            <person name="Richardson P.M."/>
            <person name="Hristova K.R."/>
        </authorList>
    </citation>
    <scope>NUCLEOTIDE SEQUENCE [LARGE SCALE GENOMIC DNA]</scope>
    <source>
        <strain>ATCC BAA-1232 / LMG 22953 / PM1</strain>
    </source>
</reference>
<organism>
    <name type="scientific">Methylibium petroleiphilum (strain ATCC BAA-1232 / LMG 22953 / PM1)</name>
    <dbReference type="NCBI Taxonomy" id="420662"/>
    <lineage>
        <taxon>Bacteria</taxon>
        <taxon>Pseudomonadati</taxon>
        <taxon>Pseudomonadota</taxon>
        <taxon>Betaproteobacteria</taxon>
        <taxon>Burkholderiales</taxon>
        <taxon>Sphaerotilaceae</taxon>
        <taxon>Methylibium</taxon>
    </lineage>
</organism>
<gene>
    <name evidence="1" type="primary">cynS</name>
    <name type="ordered locus">Mpe_A3484</name>
</gene>
<accession>A2SLJ8</accession>
<name>CYNS_METPP</name>
<sequence length="147" mass="16416">MSRLEVTEKIVATKVAKGLKWSDIAAKVGLSKEWTTAACLGQMTLTKEQAGIVGEIFSLSDAEQKWLMVVPYKGSLPTTVPTDPLIYRFYELVSVYGTTFKELIHEEFGDGIMSAIDFKMDLQREPHPAGDRVSITMSGKFLPYKTY</sequence>
<evidence type="ECO:0000255" key="1">
    <source>
        <dbReference type="HAMAP-Rule" id="MF_00535"/>
    </source>
</evidence>
<comment type="function">
    <text evidence="1">Catalyzes the reaction of cyanate with bicarbonate to produce ammonia and carbon dioxide.</text>
</comment>
<comment type="catalytic activity">
    <reaction evidence="1">
        <text>cyanate + hydrogencarbonate + 3 H(+) = NH4(+) + 2 CO2</text>
        <dbReference type="Rhea" id="RHEA:11120"/>
        <dbReference type="ChEBI" id="CHEBI:15378"/>
        <dbReference type="ChEBI" id="CHEBI:16526"/>
        <dbReference type="ChEBI" id="CHEBI:17544"/>
        <dbReference type="ChEBI" id="CHEBI:28938"/>
        <dbReference type="ChEBI" id="CHEBI:29195"/>
        <dbReference type="EC" id="4.2.1.104"/>
    </reaction>
</comment>
<comment type="similarity">
    <text evidence="1">Belongs to the cyanase family.</text>
</comment>
<dbReference type="EC" id="4.2.1.104" evidence="1"/>
<dbReference type="EMBL" id="CP000555">
    <property type="protein sequence ID" value="ABM96437.1"/>
    <property type="molecule type" value="Genomic_DNA"/>
</dbReference>
<dbReference type="RefSeq" id="WP_011831057.1">
    <property type="nucleotide sequence ID" value="NC_008825.1"/>
</dbReference>
<dbReference type="SMR" id="A2SLJ8"/>
<dbReference type="STRING" id="420662.Mpe_A3484"/>
<dbReference type="KEGG" id="mpt:Mpe_A3484"/>
<dbReference type="eggNOG" id="COG1513">
    <property type="taxonomic scope" value="Bacteria"/>
</dbReference>
<dbReference type="HOGENOM" id="CLU_103452_1_0_4"/>
<dbReference type="Proteomes" id="UP000000366">
    <property type="component" value="Chromosome"/>
</dbReference>
<dbReference type="GO" id="GO:0008824">
    <property type="term" value="F:cyanate hydratase activity"/>
    <property type="evidence" value="ECO:0007669"/>
    <property type="project" value="UniProtKB-UniRule"/>
</dbReference>
<dbReference type="GO" id="GO:0003677">
    <property type="term" value="F:DNA binding"/>
    <property type="evidence" value="ECO:0007669"/>
    <property type="project" value="InterPro"/>
</dbReference>
<dbReference type="GO" id="GO:0009439">
    <property type="term" value="P:cyanate metabolic process"/>
    <property type="evidence" value="ECO:0007669"/>
    <property type="project" value="UniProtKB-UniRule"/>
</dbReference>
<dbReference type="CDD" id="cd00559">
    <property type="entry name" value="Cyanase_C"/>
    <property type="match status" value="1"/>
</dbReference>
<dbReference type="Gene3D" id="3.30.1160.10">
    <property type="entry name" value="Cyanate lyase, C-terminal domain"/>
    <property type="match status" value="1"/>
</dbReference>
<dbReference type="Gene3D" id="1.10.260.40">
    <property type="entry name" value="lambda repressor-like DNA-binding domains"/>
    <property type="match status" value="1"/>
</dbReference>
<dbReference type="HAMAP" id="MF_00535">
    <property type="entry name" value="Cyanate_hydrat"/>
    <property type="match status" value="1"/>
</dbReference>
<dbReference type="InterPro" id="IPR008076">
    <property type="entry name" value="Cyanase"/>
</dbReference>
<dbReference type="InterPro" id="IPR003712">
    <property type="entry name" value="Cyanate_lyase_C"/>
</dbReference>
<dbReference type="InterPro" id="IPR036581">
    <property type="entry name" value="Cyanate_lyase_C_sf"/>
</dbReference>
<dbReference type="InterPro" id="IPR048564">
    <property type="entry name" value="CYNS_N"/>
</dbReference>
<dbReference type="InterPro" id="IPR010982">
    <property type="entry name" value="Lambda_DNA-bd_dom_sf"/>
</dbReference>
<dbReference type="NCBIfam" id="TIGR00673">
    <property type="entry name" value="cynS"/>
    <property type="match status" value="1"/>
</dbReference>
<dbReference type="NCBIfam" id="NF002773">
    <property type="entry name" value="PRK02866.1"/>
    <property type="match status" value="1"/>
</dbReference>
<dbReference type="PANTHER" id="PTHR34186">
    <property type="entry name" value="CYANATE HYDRATASE"/>
    <property type="match status" value="1"/>
</dbReference>
<dbReference type="PANTHER" id="PTHR34186:SF2">
    <property type="entry name" value="CYANATE HYDRATASE"/>
    <property type="match status" value="1"/>
</dbReference>
<dbReference type="Pfam" id="PF02560">
    <property type="entry name" value="Cyanate_lyase"/>
    <property type="match status" value="1"/>
</dbReference>
<dbReference type="Pfam" id="PF21291">
    <property type="entry name" value="CYNS_N"/>
    <property type="match status" value="1"/>
</dbReference>
<dbReference type="PIRSF" id="PIRSF001263">
    <property type="entry name" value="Cyanate_hydratas"/>
    <property type="match status" value="1"/>
</dbReference>
<dbReference type="PRINTS" id="PR01693">
    <property type="entry name" value="CYANASE"/>
</dbReference>
<dbReference type="SMART" id="SM01116">
    <property type="entry name" value="Cyanate_lyase"/>
    <property type="match status" value="1"/>
</dbReference>
<dbReference type="SUPFAM" id="SSF55234">
    <property type="entry name" value="Cyanase C-terminal domain"/>
    <property type="match status" value="1"/>
</dbReference>
<dbReference type="SUPFAM" id="SSF47413">
    <property type="entry name" value="lambda repressor-like DNA-binding domains"/>
    <property type="match status" value="1"/>
</dbReference>